<accession>Q08011</accession>
<comment type="function">
    <text>Binds to sialic acid-containing receptors on the cell surface, bringing about the attachment of the virus particle to the cell. This attachment induces virion internalization of about two third of the virus particles through clathrin-dependent endocytosis and about one third through a clathrin- and caveolin-independent pathway. Plays a major role in the determination of host range restriction and virulence. Class I viral fusion protein. Responsible for penetration of the virus into the cell cytoplasm by mediating the fusion of the membrane of the endocytosed virus particle with the endosomal membrane. Low pH in endosomes induces an irreversible conformational change in HA2, releasing the fusion hydrophobic peptide. Several trimers are required to form a competent fusion pore.</text>
</comment>
<comment type="function">
    <text evidence="2">Binds to sialic acid-containing receptors on the cell surface, bringing about the attachment of the virus particle to the cell. This attachment induces virion internalization either through clathrin-dependent endocytosis or through clathrin- and caveolin-independent pathway. Plays a major role in the determination of host range restriction and virulence. Class I viral fusion protein. Responsible for penetration of the virus into the cell cytoplasm by mediating the fusion of the membrane of the endocytosed virus particle with the endosomal membrane. Low pH in endosomes induces an irreversible conformational change in HA2, releasing the fusion hydrophobic peptide. Several trimers are required to form a competent fusion pore.</text>
</comment>
<comment type="subunit">
    <text evidence="2">Homotrimer of disulfide-linked HA1-HA2.</text>
</comment>
<comment type="subcellular location">
    <subcellularLocation>
        <location evidence="2">Virion membrane</location>
        <topology evidence="2">Single-pass type I membrane protein</topology>
    </subcellularLocation>
    <subcellularLocation>
        <location evidence="2">Host apical cell membrane</location>
        <topology evidence="2">Single-pass type I membrane protein</topology>
    </subcellularLocation>
    <text evidence="2">Targeted to the apical plasma membrane in epithelial polarized cells through a signal present in the transmembrane domain. Associated with glycosphingolipid- and cholesterol-enriched detergent-resistant lipid rafts.</text>
</comment>
<comment type="PTM">
    <text evidence="2">Palmitoylated.</text>
</comment>
<comment type="PTM">
    <text evidence="2">In natural infection, inactive HA is matured into HA1 and HA2 outside the cell by one or more trypsin-like, arginine-specific endoprotease secreted by the bronchial epithelial cells. One identified protease that may be involved in this process is secreted in lungs by club cells.</text>
</comment>
<comment type="miscellaneous">
    <text>Major glycoprotein, comprises over 80% of the envelope proteins present in virus particle.</text>
</comment>
<comment type="miscellaneous">
    <text>The extent of infection into host organism is determined by HA. Influenza viruses bud from the apical surface of polarized epithelial cells (e.g. bronchial epithelial cells) into lumen of lungs and are therefore usually pneumotropic. The reason is that HA is cleaved by tryptase clara which is restricted to lungs. However, HAs of H5 and H7 pantropic avian viruses subtypes can be cleaved by furin and subtilisin-type enzymes, allowing the virus to grow in other organs than lungs.</text>
</comment>
<comment type="miscellaneous">
    <text evidence="3">The influenza A genome consist of 8 RNA segments. Genetic variation of hemagglutinin and/or neuraminidase genes results in the emergence of new influenza strains. The mechanism of variation can be the result of point mutations or the result of genetic reassortment between segments of two different strains.</text>
</comment>
<comment type="similarity">
    <text evidence="2">Belongs to the influenza viruses hemagglutinin family.</text>
</comment>
<reference key="1">
    <citation type="journal article" date="1993" name="Arch. Virol.">
        <title>Genetic and antigenic analysis of an equine influenza H 3 isolate from the 1989 epidemic.</title>
        <authorList>
            <person name="Binns M.M."/>
            <person name="Daly J.M."/>
            <person name="Chirnside E.D."/>
            <person name="Mumford J.A."/>
            <person name="Wood J.M."/>
            <person name="Richards C.M."/>
            <person name="Daniels R.S."/>
        </authorList>
    </citation>
    <scope>NUCLEOTIDE SEQUENCE [GENOMIC RNA]</scope>
</reference>
<organism>
    <name type="scientific">Influenza A virus (strain A/Equine/Suffolk/1989 H3N8)</name>
    <dbReference type="NCBI Taxonomy" id="45413"/>
    <lineage>
        <taxon>Viruses</taxon>
        <taxon>Riboviria</taxon>
        <taxon>Orthornavirae</taxon>
        <taxon>Negarnaviricota</taxon>
        <taxon>Polyploviricotina</taxon>
        <taxon>Insthoviricetes</taxon>
        <taxon>Articulavirales</taxon>
        <taxon>Orthomyxoviridae</taxon>
        <taxon>Alphainfluenzavirus</taxon>
        <taxon>Alphainfluenzavirus influenzae</taxon>
        <taxon>Influenza A virus</taxon>
    </lineage>
</organism>
<keyword id="KW-0002">3D-structure</keyword>
<keyword id="KW-1167">Clathrin- and caveolin-independent endocytosis of virus by host</keyword>
<keyword id="KW-1165">Clathrin-mediated endocytosis of virus by host</keyword>
<keyword id="KW-1015">Disulfide bond</keyword>
<keyword id="KW-1170">Fusion of virus membrane with host endosomal membrane</keyword>
<keyword id="KW-1168">Fusion of virus membrane with host membrane</keyword>
<keyword id="KW-0325">Glycoprotein</keyword>
<keyword id="KW-0348">Hemagglutinin</keyword>
<keyword id="KW-1032">Host cell membrane</keyword>
<keyword id="KW-1043">Host membrane</keyword>
<keyword id="KW-0945">Host-virus interaction</keyword>
<keyword id="KW-0449">Lipoprotein</keyword>
<keyword id="KW-0472">Membrane</keyword>
<keyword id="KW-0564">Palmitate</keyword>
<keyword id="KW-0732">Signal</keyword>
<keyword id="KW-0812">Transmembrane</keyword>
<keyword id="KW-1133">Transmembrane helix</keyword>
<keyword id="KW-1161">Viral attachment to host cell</keyword>
<keyword id="KW-0261">Viral envelope protein</keyword>
<keyword id="KW-1162">Viral penetration into host cytoplasm</keyword>
<keyword id="KW-0946">Virion</keyword>
<keyword id="KW-1164">Virus endocytosis by host</keyword>
<keyword id="KW-1160">Virus entry into host cell</keyword>
<sequence>MKTTIILILLTHWVYSQNPTSGNNTATLCLGHHAVANGTLVKTITDDQIEVTNATELVQSISIGKICNNSYRVLDGRNCTLIDAMLGDPHCDVFQYENWDLFIERSSAFSNCYPYDIPDYASLRSIVASSGTLEFTAEGFTWTGVTQNGRSGACKRGSADSFFSRLNWLTKSGNSYPILNVTMPNNKNFDKLYIWGIHHPSSNKEQTKLYIQESGRVTVSTERSQQTVIPNIGSRPWVRGQSGRISIYWTIVKPGDILTINSNGNLVAPRGYFKLRTGKSSVMRSDAPIDTCVSECITPNGSIPNDKPFQNVNKVTYGKCPKYIRQNTLKLATGMRNVPEKQIRGIFGAIAGFIENGWEGMVDGWYGFRYQNSEGTGQAADLKSTQAAIDQINGKLNRVIERTNEKFHQIEKEFSEVEGRIQDLEKYVEDTKIDLWSYNAELLVALENQHTIDLTDAEMNKLFEKTRRQLRENAEDMGGGCFKIYHKCDNACIGSIRNGTYDHYIYRDEALNNRFQIKGVELKSGYKDWILWISFAISCFLICVVLLGFIMWACQKGNIRCNICI</sequence>
<evidence type="ECO:0000250" key="1"/>
<evidence type="ECO:0000255" key="2">
    <source>
        <dbReference type="HAMAP-Rule" id="MF_04072"/>
    </source>
</evidence>
<evidence type="ECO:0000305" key="3"/>
<evidence type="ECO:0007829" key="4">
    <source>
        <dbReference type="PDB" id="4UNY"/>
    </source>
</evidence>
<protein>
    <recommendedName>
        <fullName evidence="2">Hemagglutinin</fullName>
    </recommendedName>
    <component>
        <recommendedName>
            <fullName evidence="2">Hemagglutinin HA1 chain</fullName>
        </recommendedName>
    </component>
    <component>
        <recommendedName>
            <fullName evidence="2">Hemagglutinin HA2 chain</fullName>
        </recommendedName>
    </component>
</protein>
<gene>
    <name evidence="2" type="primary">HA</name>
</gene>
<proteinExistence type="evidence at protein level"/>
<name>HEMA_I89A8</name>
<organismHost>
    <name type="scientific">Aves</name>
    <dbReference type="NCBI Taxonomy" id="8782"/>
</organismHost>
<organismHost>
    <name type="scientific">Equus caballus</name>
    <name type="common">Horse</name>
    <dbReference type="NCBI Taxonomy" id="9796"/>
</organismHost>
<feature type="signal peptide" evidence="2">
    <location>
        <begin position="1"/>
        <end position="16"/>
    </location>
</feature>
<feature type="chain" id="PRO_0000440534" description="Hemagglutinin" evidence="2">
    <location>
        <begin position="17"/>
        <end position="565"/>
    </location>
</feature>
<feature type="chain" id="PRO_0000039000" description="Hemagglutinin HA1 chain" evidence="1">
    <location>
        <begin position="17"/>
        <end position="343"/>
    </location>
</feature>
<feature type="chain" id="PRO_0000039001" description="Hemagglutinin HA2 chain" evidence="2">
    <location>
        <begin position="345"/>
        <end position="565"/>
    </location>
</feature>
<feature type="topological domain" description="Extracellular" evidence="2">
    <location>
        <begin position="17"/>
        <end position="529"/>
    </location>
</feature>
<feature type="transmembrane region" description="Helical" evidence="2">
    <location>
        <begin position="530"/>
        <end position="550"/>
    </location>
</feature>
<feature type="topological domain" description="Cytoplasmic" evidence="2">
    <location>
        <begin position="551"/>
        <end position="565"/>
    </location>
</feature>
<feature type="site" description="Cleavage; by host" evidence="2">
    <location>
        <begin position="344"/>
        <end position="345"/>
    </location>
</feature>
<feature type="lipid moiety-binding region" description="S-palmitoyl cysteine; by host" evidence="2">
    <location>
        <position position="554"/>
    </location>
</feature>
<feature type="lipid moiety-binding region" description="S-palmitoyl cysteine; by host" evidence="2">
    <location>
        <position position="561"/>
    </location>
</feature>
<feature type="lipid moiety-binding region" description="S-palmitoyl cysteine; by host" evidence="2">
    <location>
        <position position="564"/>
    </location>
</feature>
<feature type="glycosylation site" description="N-linked (GlcNAc...) asparagine; by host" evidence="2">
    <location>
        <position position="23"/>
    </location>
</feature>
<feature type="glycosylation site" description="N-linked (GlcNAc...) asparagine; by host" evidence="2">
    <location>
        <position position="37"/>
    </location>
</feature>
<feature type="glycosylation site" description="N-linked (GlcNAc...) asparagine; by host" evidence="2">
    <location>
        <position position="53"/>
    </location>
</feature>
<feature type="glycosylation site" description="N-linked (GlcNAc...) asparagine; by host" evidence="2">
    <location>
        <position position="68"/>
    </location>
</feature>
<feature type="glycosylation site" description="N-linked (GlcNAc...) asparagine; by host" evidence="2">
    <location>
        <position position="78"/>
    </location>
</feature>
<feature type="glycosylation site" description="N-linked (GlcNAc...) asparagine; by host" evidence="2">
    <location>
        <position position="180"/>
    </location>
</feature>
<feature type="glycosylation site" description="N-linked (GlcNAc...) asparagine; by host" evidence="2">
    <location>
        <position position="300"/>
    </location>
</feature>
<feature type="glycosylation site" description="N-linked (GlcNAc...) asparagine; by host" evidence="2">
    <location>
        <position position="498"/>
    </location>
</feature>
<feature type="disulfide bond" description="Interchain (between HA1 and HA2 chains)" evidence="2">
    <location>
        <begin position="29"/>
        <end position="481"/>
    </location>
</feature>
<feature type="disulfide bond" evidence="2">
    <location>
        <begin position="67"/>
        <end position="292"/>
    </location>
</feature>
<feature type="disulfide bond" evidence="2">
    <location>
        <begin position="79"/>
        <end position="91"/>
    </location>
</feature>
<feature type="disulfide bond" evidence="2">
    <location>
        <begin position="112"/>
        <end position="154"/>
    </location>
</feature>
<feature type="disulfide bond" evidence="2">
    <location>
        <begin position="296"/>
        <end position="320"/>
    </location>
</feature>
<feature type="disulfide bond" evidence="2">
    <location>
        <begin position="488"/>
        <end position="492"/>
    </location>
</feature>
<feature type="helix" evidence="4">
    <location>
        <begin position="349"/>
        <end position="353"/>
    </location>
</feature>
<feature type="strand" evidence="4">
    <location>
        <begin position="365"/>
        <end position="372"/>
    </location>
</feature>
<feature type="strand" evidence="4">
    <location>
        <begin position="375"/>
        <end position="380"/>
    </location>
</feature>
<feature type="helix" evidence="4">
    <location>
        <begin position="382"/>
        <end position="399"/>
    </location>
</feature>
<feature type="strand" evidence="4">
    <location>
        <begin position="404"/>
        <end position="406"/>
    </location>
</feature>
<feature type="helix" evidence="4">
    <location>
        <begin position="420"/>
        <end position="470"/>
    </location>
</feature>
<feature type="helix" evidence="4">
    <location>
        <begin position="471"/>
        <end position="473"/>
    </location>
</feature>
<feature type="strand" evidence="4">
    <location>
        <begin position="474"/>
        <end position="478"/>
    </location>
</feature>
<feature type="strand" evidence="4">
    <location>
        <begin position="481"/>
        <end position="484"/>
    </location>
</feature>
<feature type="helix" evidence="4">
    <location>
        <begin position="490"/>
        <end position="498"/>
    </location>
</feature>
<feature type="helix" evidence="4">
    <location>
        <begin position="503"/>
        <end position="514"/>
    </location>
</feature>
<dbReference type="EMBL" id="X68437">
    <property type="protein sequence ID" value="CAA48482.1"/>
    <property type="molecule type" value="Genomic_RNA"/>
</dbReference>
<dbReference type="PDB" id="4UNY">
    <property type="method" value="X-ray"/>
    <property type="resolution" value="2.90 A"/>
    <property type="chains" value="B/D/F=345-517"/>
</dbReference>
<dbReference type="PDBsum" id="4UNY"/>
<dbReference type="SMR" id="Q08011"/>
<dbReference type="GlyCosmos" id="Q08011">
    <property type="glycosylation" value="8 sites, No reported glycans"/>
</dbReference>
<dbReference type="GO" id="GO:0020002">
    <property type="term" value="C:host cell plasma membrane"/>
    <property type="evidence" value="ECO:0007669"/>
    <property type="project" value="UniProtKB-SubCell"/>
</dbReference>
<dbReference type="GO" id="GO:0016020">
    <property type="term" value="C:membrane"/>
    <property type="evidence" value="ECO:0007669"/>
    <property type="project" value="UniProtKB-UniRule"/>
</dbReference>
<dbReference type="GO" id="GO:0019031">
    <property type="term" value="C:viral envelope"/>
    <property type="evidence" value="ECO:0007669"/>
    <property type="project" value="UniProtKB-UniRule"/>
</dbReference>
<dbReference type="GO" id="GO:0055036">
    <property type="term" value="C:virion membrane"/>
    <property type="evidence" value="ECO:0007669"/>
    <property type="project" value="UniProtKB-SubCell"/>
</dbReference>
<dbReference type="GO" id="GO:0046789">
    <property type="term" value="F:host cell surface receptor binding"/>
    <property type="evidence" value="ECO:0007669"/>
    <property type="project" value="UniProtKB-UniRule"/>
</dbReference>
<dbReference type="GO" id="GO:0075512">
    <property type="term" value="P:clathrin-dependent endocytosis of virus by host cell"/>
    <property type="evidence" value="ECO:0007669"/>
    <property type="project" value="UniProtKB-UniRule"/>
</dbReference>
<dbReference type="GO" id="GO:0039654">
    <property type="term" value="P:fusion of virus membrane with host endosome membrane"/>
    <property type="evidence" value="ECO:0007669"/>
    <property type="project" value="UniProtKB-UniRule"/>
</dbReference>
<dbReference type="GO" id="GO:0019064">
    <property type="term" value="P:fusion of virus membrane with host plasma membrane"/>
    <property type="evidence" value="ECO:0007669"/>
    <property type="project" value="InterPro"/>
</dbReference>
<dbReference type="GO" id="GO:0046761">
    <property type="term" value="P:viral budding from plasma membrane"/>
    <property type="evidence" value="ECO:0007669"/>
    <property type="project" value="UniProtKB-UniRule"/>
</dbReference>
<dbReference type="GO" id="GO:0019062">
    <property type="term" value="P:virion attachment to host cell"/>
    <property type="evidence" value="ECO:0007669"/>
    <property type="project" value="UniProtKB-KW"/>
</dbReference>
<dbReference type="FunFam" id="3.90.20.10:FF:000001">
    <property type="entry name" value="Hemagglutinin"/>
    <property type="match status" value="1"/>
</dbReference>
<dbReference type="FunFam" id="3.90.209.20:FF:000001">
    <property type="entry name" value="Hemagglutinin"/>
    <property type="match status" value="1"/>
</dbReference>
<dbReference type="Gene3D" id="3.90.20.10">
    <property type="match status" value="1"/>
</dbReference>
<dbReference type="Gene3D" id="3.90.209.20">
    <property type="match status" value="1"/>
</dbReference>
<dbReference type="HAMAP" id="MF_04072">
    <property type="entry name" value="INFV_HEMA"/>
    <property type="match status" value="1"/>
</dbReference>
<dbReference type="InterPro" id="IPR008980">
    <property type="entry name" value="Capsid_hemagglutn"/>
</dbReference>
<dbReference type="InterPro" id="IPR013828">
    <property type="entry name" value="Hemagglutn_HA1_a/b_dom_sf"/>
</dbReference>
<dbReference type="InterPro" id="IPR000149">
    <property type="entry name" value="Hemagglutn_influenz_A"/>
</dbReference>
<dbReference type="InterPro" id="IPR001364">
    <property type="entry name" value="Hemagglutn_influenz_A/B"/>
</dbReference>
<dbReference type="Pfam" id="PF00509">
    <property type="entry name" value="Hemagglutinin"/>
    <property type="match status" value="1"/>
</dbReference>
<dbReference type="PRINTS" id="PR00330">
    <property type="entry name" value="HEMAGGLUTN1"/>
</dbReference>
<dbReference type="PRINTS" id="PR00329">
    <property type="entry name" value="HEMAGGLUTN12"/>
</dbReference>
<dbReference type="SUPFAM" id="SSF58064">
    <property type="entry name" value="Influenza hemagglutinin (stalk)"/>
    <property type="match status" value="1"/>
</dbReference>
<dbReference type="SUPFAM" id="SSF49818">
    <property type="entry name" value="Viral protein domain"/>
    <property type="match status" value="1"/>
</dbReference>